<organism>
    <name type="scientific">Burkholderia ambifaria (strain ATCC BAA-244 / DSM 16087 / CCUG 44356 / LMG 19182 / AMMD)</name>
    <name type="common">Burkholderia cepacia (strain AMMD)</name>
    <dbReference type="NCBI Taxonomy" id="339670"/>
    <lineage>
        <taxon>Bacteria</taxon>
        <taxon>Pseudomonadati</taxon>
        <taxon>Pseudomonadota</taxon>
        <taxon>Betaproteobacteria</taxon>
        <taxon>Burkholderiales</taxon>
        <taxon>Burkholderiaceae</taxon>
        <taxon>Burkholderia</taxon>
        <taxon>Burkholderia cepacia complex</taxon>
    </lineage>
</organism>
<comment type="function">
    <text evidence="1">Catalyzes the ATP- as well as the pyrophosphate-dependent phosphorylation of a specific serine residue in HPr, a phosphocarrier protein of the phosphoenolpyruvate-dependent sugar phosphotransferase system (PTS). HprK/P also catalyzes the pyrophosphate-producing, inorganic phosphate-dependent dephosphorylation (phosphorolysis) of seryl-phosphorylated HPr (P-Ser-HPr).</text>
</comment>
<comment type="catalytic activity">
    <reaction evidence="1">
        <text>[HPr protein]-L-serine + ATP = [HPr protein]-O-phospho-L-serine + ADP + H(+)</text>
        <dbReference type="Rhea" id="RHEA:46600"/>
        <dbReference type="Rhea" id="RHEA-COMP:11602"/>
        <dbReference type="Rhea" id="RHEA-COMP:11603"/>
        <dbReference type="ChEBI" id="CHEBI:15378"/>
        <dbReference type="ChEBI" id="CHEBI:29999"/>
        <dbReference type="ChEBI" id="CHEBI:30616"/>
        <dbReference type="ChEBI" id="CHEBI:83421"/>
        <dbReference type="ChEBI" id="CHEBI:456216"/>
    </reaction>
</comment>
<comment type="catalytic activity">
    <reaction evidence="1">
        <text>[HPr protein]-O-phospho-L-serine + phosphate + H(+) = [HPr protein]-L-serine + diphosphate</text>
        <dbReference type="Rhea" id="RHEA:46604"/>
        <dbReference type="Rhea" id="RHEA-COMP:11602"/>
        <dbReference type="Rhea" id="RHEA-COMP:11603"/>
        <dbReference type="ChEBI" id="CHEBI:15378"/>
        <dbReference type="ChEBI" id="CHEBI:29999"/>
        <dbReference type="ChEBI" id="CHEBI:33019"/>
        <dbReference type="ChEBI" id="CHEBI:43474"/>
        <dbReference type="ChEBI" id="CHEBI:83421"/>
    </reaction>
</comment>
<comment type="cofactor">
    <cofactor evidence="1">
        <name>Mg(2+)</name>
        <dbReference type="ChEBI" id="CHEBI:18420"/>
    </cofactor>
</comment>
<comment type="subunit">
    <text evidence="1">Homohexamer.</text>
</comment>
<comment type="domain">
    <text evidence="1">The Walker A ATP-binding motif also binds Pi and PPi.</text>
</comment>
<comment type="miscellaneous">
    <text evidence="1">Both phosphorylation and phosphorolysis are carried out by the same active site and suggest a common mechanism for both reactions.</text>
</comment>
<comment type="similarity">
    <text evidence="1">Belongs to the HPrK/P family.</text>
</comment>
<feature type="chain" id="PRO_1000067129" description="HPr kinase/phosphorylase">
    <location>
        <begin position="1"/>
        <end position="322"/>
    </location>
</feature>
<feature type="region of interest" description="Important for the catalytic mechanism of both phosphorylation and dephosphorylation" evidence="1">
    <location>
        <begin position="209"/>
        <end position="218"/>
    </location>
</feature>
<feature type="region of interest" description="Important for the catalytic mechanism of dephosphorylation" evidence="1">
    <location>
        <begin position="271"/>
        <end position="276"/>
    </location>
</feature>
<feature type="active site" evidence="1">
    <location>
        <position position="146"/>
    </location>
</feature>
<feature type="active site" evidence="1">
    <location>
        <position position="167"/>
    </location>
</feature>
<feature type="active site" description="Proton acceptor; for phosphorylation activity. Proton donor; for dephosphorylation activity" evidence="1">
    <location>
        <position position="185"/>
    </location>
</feature>
<feature type="active site" evidence="1">
    <location>
        <position position="250"/>
    </location>
</feature>
<feature type="binding site" evidence="1">
    <location>
        <begin position="161"/>
        <end position="168"/>
    </location>
    <ligand>
        <name>ATP</name>
        <dbReference type="ChEBI" id="CHEBI:30616"/>
    </ligand>
</feature>
<feature type="binding site" evidence="1">
    <location>
        <position position="168"/>
    </location>
    <ligand>
        <name>Mg(2+)</name>
        <dbReference type="ChEBI" id="CHEBI:18420"/>
    </ligand>
</feature>
<feature type="binding site" evidence="1">
    <location>
        <position position="210"/>
    </location>
    <ligand>
        <name>Mg(2+)</name>
        <dbReference type="ChEBI" id="CHEBI:18420"/>
    </ligand>
</feature>
<accession>Q0BBR3</accession>
<protein>
    <recommendedName>
        <fullName evidence="1">HPr kinase/phosphorylase</fullName>
        <shortName evidence="1">HPrK/P</shortName>
        <ecNumber evidence="1">2.7.11.-</ecNumber>
        <ecNumber evidence="1">2.7.4.-</ecNumber>
    </recommendedName>
    <alternativeName>
        <fullName evidence="1">HPr(Ser) kinase/phosphorylase</fullName>
    </alternativeName>
</protein>
<proteinExistence type="inferred from homology"/>
<gene>
    <name evidence="1" type="primary">hprK</name>
    <name type="ordered locus">Bamb_2854</name>
</gene>
<evidence type="ECO:0000255" key="1">
    <source>
        <dbReference type="HAMAP-Rule" id="MF_01249"/>
    </source>
</evidence>
<sequence>MDTSSINAQSIFDDNAATLKLSWLTGHEGWERGFSSDTVANATSSADLVGHLNLIHPNRIQVLGEAEIDYYQRQTDEDRSRHMAELIALEPPFLVVAGGAAAPPELVLRCTRSSTPLFTTPMSAAAVIDSLRLYMSRILAPRATLHGVFLDILGMGVLLTGDSGLGKSELGLELISRGHGLVADDAVDFVRLGPDFVEGRCPPLLQNLLEVRGLGLLDIKTIFGETAVRRKMKLKLIVQLVRRPDGEFQRLPLESQTVDVLGLPISKVTIQVAAGRNLAVLVEAAVRNTILQLRGIDTLRDFMDRQRLAMQDPDSQFPGKLV</sequence>
<dbReference type="EC" id="2.7.11.-" evidence="1"/>
<dbReference type="EC" id="2.7.4.-" evidence="1"/>
<dbReference type="EMBL" id="CP000440">
    <property type="protein sequence ID" value="ABI88410.1"/>
    <property type="molecule type" value="Genomic_DNA"/>
</dbReference>
<dbReference type="RefSeq" id="WP_011657967.1">
    <property type="nucleotide sequence ID" value="NZ_CP009798.1"/>
</dbReference>
<dbReference type="SMR" id="Q0BBR3"/>
<dbReference type="GeneID" id="93084945"/>
<dbReference type="KEGG" id="bam:Bamb_2854"/>
<dbReference type="PATRIC" id="fig|339670.21.peg.2033"/>
<dbReference type="eggNOG" id="COG1493">
    <property type="taxonomic scope" value="Bacteria"/>
</dbReference>
<dbReference type="Proteomes" id="UP000000662">
    <property type="component" value="Chromosome 1"/>
</dbReference>
<dbReference type="GO" id="GO:0005524">
    <property type="term" value="F:ATP binding"/>
    <property type="evidence" value="ECO:0007669"/>
    <property type="project" value="UniProtKB-UniRule"/>
</dbReference>
<dbReference type="GO" id="GO:0000287">
    <property type="term" value="F:magnesium ion binding"/>
    <property type="evidence" value="ECO:0007669"/>
    <property type="project" value="UniProtKB-UniRule"/>
</dbReference>
<dbReference type="GO" id="GO:0000155">
    <property type="term" value="F:phosphorelay sensor kinase activity"/>
    <property type="evidence" value="ECO:0007669"/>
    <property type="project" value="InterPro"/>
</dbReference>
<dbReference type="GO" id="GO:0004674">
    <property type="term" value="F:protein serine/threonine kinase activity"/>
    <property type="evidence" value="ECO:0007669"/>
    <property type="project" value="UniProtKB-KW"/>
</dbReference>
<dbReference type="GO" id="GO:0004712">
    <property type="term" value="F:protein serine/threonine/tyrosine kinase activity"/>
    <property type="evidence" value="ECO:0007669"/>
    <property type="project" value="UniProtKB-UniRule"/>
</dbReference>
<dbReference type="GO" id="GO:0006109">
    <property type="term" value="P:regulation of carbohydrate metabolic process"/>
    <property type="evidence" value="ECO:0007669"/>
    <property type="project" value="UniProtKB-UniRule"/>
</dbReference>
<dbReference type="CDD" id="cd01918">
    <property type="entry name" value="HprK_C"/>
    <property type="match status" value="1"/>
</dbReference>
<dbReference type="FunFam" id="3.40.50.300:FF:000174">
    <property type="entry name" value="HPr kinase/phosphorylase"/>
    <property type="match status" value="1"/>
</dbReference>
<dbReference type="Gene3D" id="3.40.1390.20">
    <property type="entry name" value="HprK N-terminal domain-like"/>
    <property type="match status" value="1"/>
</dbReference>
<dbReference type="Gene3D" id="3.40.50.300">
    <property type="entry name" value="P-loop containing nucleotide triphosphate hydrolases"/>
    <property type="match status" value="1"/>
</dbReference>
<dbReference type="HAMAP" id="MF_01249">
    <property type="entry name" value="HPr_kinase"/>
    <property type="match status" value="1"/>
</dbReference>
<dbReference type="InterPro" id="IPR003755">
    <property type="entry name" value="HPr(Ser)_kin/Pase"/>
</dbReference>
<dbReference type="InterPro" id="IPR011104">
    <property type="entry name" value="Hpr_kin/Pase_C"/>
</dbReference>
<dbReference type="InterPro" id="IPR011126">
    <property type="entry name" value="Hpr_kin/Pase_Hpr_N"/>
</dbReference>
<dbReference type="InterPro" id="IPR027417">
    <property type="entry name" value="P-loop_NTPase"/>
</dbReference>
<dbReference type="InterPro" id="IPR028979">
    <property type="entry name" value="Ser_kin/Pase_Hpr-like_N_sf"/>
</dbReference>
<dbReference type="NCBIfam" id="TIGR00679">
    <property type="entry name" value="hpr-ser"/>
    <property type="match status" value="1"/>
</dbReference>
<dbReference type="PANTHER" id="PTHR30305:SF1">
    <property type="entry name" value="HPR KINASE_PHOSPHORYLASE"/>
    <property type="match status" value="1"/>
</dbReference>
<dbReference type="PANTHER" id="PTHR30305">
    <property type="entry name" value="PROTEIN YJDM-RELATED"/>
    <property type="match status" value="1"/>
</dbReference>
<dbReference type="Pfam" id="PF07475">
    <property type="entry name" value="Hpr_kinase_C"/>
    <property type="match status" value="1"/>
</dbReference>
<dbReference type="Pfam" id="PF02603">
    <property type="entry name" value="Hpr_kinase_N"/>
    <property type="match status" value="1"/>
</dbReference>
<dbReference type="SUPFAM" id="SSF75138">
    <property type="entry name" value="HprK N-terminal domain-like"/>
    <property type="match status" value="1"/>
</dbReference>
<dbReference type="SUPFAM" id="SSF53795">
    <property type="entry name" value="PEP carboxykinase-like"/>
    <property type="match status" value="1"/>
</dbReference>
<keyword id="KW-0067">ATP-binding</keyword>
<keyword id="KW-0418">Kinase</keyword>
<keyword id="KW-0460">Magnesium</keyword>
<keyword id="KW-0479">Metal-binding</keyword>
<keyword id="KW-0511">Multifunctional enzyme</keyword>
<keyword id="KW-0547">Nucleotide-binding</keyword>
<keyword id="KW-0723">Serine/threonine-protein kinase</keyword>
<keyword id="KW-0808">Transferase</keyword>
<reference key="1">
    <citation type="submission" date="2006-08" db="EMBL/GenBank/DDBJ databases">
        <title>Complete sequence of chromosome 1 of Burkholderia cepacia AMMD.</title>
        <authorList>
            <person name="Copeland A."/>
            <person name="Lucas S."/>
            <person name="Lapidus A."/>
            <person name="Barry K."/>
            <person name="Detter J.C."/>
            <person name="Glavina del Rio T."/>
            <person name="Hammon N."/>
            <person name="Israni S."/>
            <person name="Pitluck S."/>
            <person name="Bruce D."/>
            <person name="Chain P."/>
            <person name="Malfatti S."/>
            <person name="Shin M."/>
            <person name="Vergez L."/>
            <person name="Schmutz J."/>
            <person name="Larimer F."/>
            <person name="Land M."/>
            <person name="Hauser L."/>
            <person name="Kyrpides N."/>
            <person name="Kim E."/>
            <person name="Parke J."/>
            <person name="Coenye T."/>
            <person name="Konstantinidis K."/>
            <person name="Ramette A."/>
            <person name="Tiedje J."/>
            <person name="Richardson P."/>
        </authorList>
    </citation>
    <scope>NUCLEOTIDE SEQUENCE [LARGE SCALE GENOMIC DNA]</scope>
    <source>
        <strain>ATCC BAA-244 / DSM 16087 / CCUG 44356 / LMG 19182 / AMMD</strain>
    </source>
</reference>
<name>HPRK_BURCM</name>